<name>RF1_ECOLU</name>
<protein>
    <recommendedName>
        <fullName evidence="1">Peptide chain release factor 1</fullName>
        <shortName evidence="1">RF-1</shortName>
    </recommendedName>
</protein>
<sequence>MKPSIVAKLEALHERHEEVQALLGDAQTIADQERFRALSREYAQLSDVSRCFTDWQQVQEDIETAQMMLDDPEMREMAQDELREAKEKSEQLEQQLQVLLLPKDPDDERNAFLEVRAGTGGDEAALFAGDLFRMYSRYAEARRWRVEIMSASEGEHGGYKEIIAKISGDGVYGRLKFESGGHRVQRVPATESQGRIHTSACTVAVMPELPDAELPDINPADLRIDTFRSSGAGGQHVNTTDSAIRITHLPTGIVVECQDERSQHKNKAKALSVLGARIHAAEMAKRQQAEASTRRNLLGSGDRSDRNRTYNFPQGRVTDHRINLTLYRLDEVMEGKLDMLIEPIIQEHQADQLAALSEQE</sequence>
<evidence type="ECO:0000255" key="1">
    <source>
        <dbReference type="HAMAP-Rule" id="MF_00093"/>
    </source>
</evidence>
<evidence type="ECO:0000256" key="2">
    <source>
        <dbReference type="SAM" id="MobiDB-lite"/>
    </source>
</evidence>
<accession>B7N422</accession>
<keyword id="KW-0963">Cytoplasm</keyword>
<keyword id="KW-0488">Methylation</keyword>
<keyword id="KW-0648">Protein biosynthesis</keyword>
<proteinExistence type="inferred from homology"/>
<feature type="chain" id="PRO_1000117241" description="Peptide chain release factor 1">
    <location>
        <begin position="1"/>
        <end position="360"/>
    </location>
</feature>
<feature type="region of interest" description="Disordered" evidence="2">
    <location>
        <begin position="284"/>
        <end position="313"/>
    </location>
</feature>
<feature type="modified residue" description="N5-methylglutamine" evidence="1">
    <location>
        <position position="235"/>
    </location>
</feature>
<comment type="function">
    <text evidence="1">Peptide chain release factor 1 directs the termination of translation in response to the peptide chain termination codons UAG and UAA.</text>
</comment>
<comment type="subcellular location">
    <subcellularLocation>
        <location evidence="1">Cytoplasm</location>
    </subcellularLocation>
</comment>
<comment type="PTM">
    <text evidence="1">Methylated by PrmC. Methylation increases the termination efficiency of RF1.</text>
</comment>
<comment type="similarity">
    <text evidence="1">Belongs to the prokaryotic/mitochondrial release factor family.</text>
</comment>
<reference key="1">
    <citation type="journal article" date="2009" name="PLoS Genet.">
        <title>Organised genome dynamics in the Escherichia coli species results in highly diverse adaptive paths.</title>
        <authorList>
            <person name="Touchon M."/>
            <person name="Hoede C."/>
            <person name="Tenaillon O."/>
            <person name="Barbe V."/>
            <person name="Baeriswyl S."/>
            <person name="Bidet P."/>
            <person name="Bingen E."/>
            <person name="Bonacorsi S."/>
            <person name="Bouchier C."/>
            <person name="Bouvet O."/>
            <person name="Calteau A."/>
            <person name="Chiapello H."/>
            <person name="Clermont O."/>
            <person name="Cruveiller S."/>
            <person name="Danchin A."/>
            <person name="Diard M."/>
            <person name="Dossat C."/>
            <person name="Karoui M.E."/>
            <person name="Frapy E."/>
            <person name="Garry L."/>
            <person name="Ghigo J.M."/>
            <person name="Gilles A.M."/>
            <person name="Johnson J."/>
            <person name="Le Bouguenec C."/>
            <person name="Lescat M."/>
            <person name="Mangenot S."/>
            <person name="Martinez-Jehanne V."/>
            <person name="Matic I."/>
            <person name="Nassif X."/>
            <person name="Oztas S."/>
            <person name="Petit M.A."/>
            <person name="Pichon C."/>
            <person name="Rouy Z."/>
            <person name="Ruf C.S."/>
            <person name="Schneider D."/>
            <person name="Tourret J."/>
            <person name="Vacherie B."/>
            <person name="Vallenet D."/>
            <person name="Medigue C."/>
            <person name="Rocha E.P.C."/>
            <person name="Denamur E."/>
        </authorList>
    </citation>
    <scope>NUCLEOTIDE SEQUENCE [LARGE SCALE GENOMIC DNA]</scope>
    <source>
        <strain>UMN026 / ExPEC</strain>
    </source>
</reference>
<organism>
    <name type="scientific">Escherichia coli O17:K52:H18 (strain UMN026 / ExPEC)</name>
    <dbReference type="NCBI Taxonomy" id="585056"/>
    <lineage>
        <taxon>Bacteria</taxon>
        <taxon>Pseudomonadati</taxon>
        <taxon>Pseudomonadota</taxon>
        <taxon>Gammaproteobacteria</taxon>
        <taxon>Enterobacterales</taxon>
        <taxon>Enterobacteriaceae</taxon>
        <taxon>Escherichia</taxon>
    </lineage>
</organism>
<dbReference type="EMBL" id="CU928163">
    <property type="protein sequence ID" value="CAR12715.1"/>
    <property type="molecule type" value="Genomic_DNA"/>
</dbReference>
<dbReference type="RefSeq" id="WP_000804726.1">
    <property type="nucleotide sequence ID" value="NC_011751.1"/>
</dbReference>
<dbReference type="RefSeq" id="YP_002412252.1">
    <property type="nucleotide sequence ID" value="NC_011751.1"/>
</dbReference>
<dbReference type="SMR" id="B7N422"/>
<dbReference type="STRING" id="585056.ECUMN_1508"/>
<dbReference type="GeneID" id="93775276"/>
<dbReference type="KEGG" id="eum:ECUMN_1508"/>
<dbReference type="PATRIC" id="fig|585056.7.peg.1706"/>
<dbReference type="HOGENOM" id="CLU_036856_0_1_6"/>
<dbReference type="Proteomes" id="UP000007097">
    <property type="component" value="Chromosome"/>
</dbReference>
<dbReference type="GO" id="GO:0005737">
    <property type="term" value="C:cytoplasm"/>
    <property type="evidence" value="ECO:0007669"/>
    <property type="project" value="UniProtKB-SubCell"/>
</dbReference>
<dbReference type="GO" id="GO:0016149">
    <property type="term" value="F:translation release factor activity, codon specific"/>
    <property type="evidence" value="ECO:0007669"/>
    <property type="project" value="UniProtKB-UniRule"/>
</dbReference>
<dbReference type="FunFam" id="3.30.160.20:FF:000004">
    <property type="entry name" value="Peptide chain release factor 1"/>
    <property type="match status" value="1"/>
</dbReference>
<dbReference type="FunFam" id="3.30.70.1660:FF:000002">
    <property type="entry name" value="Peptide chain release factor 1"/>
    <property type="match status" value="1"/>
</dbReference>
<dbReference type="FunFam" id="3.30.70.1660:FF:000004">
    <property type="entry name" value="Peptide chain release factor 1"/>
    <property type="match status" value="1"/>
</dbReference>
<dbReference type="Gene3D" id="3.30.160.20">
    <property type="match status" value="1"/>
</dbReference>
<dbReference type="Gene3D" id="3.30.70.1660">
    <property type="match status" value="1"/>
</dbReference>
<dbReference type="Gene3D" id="6.10.140.1950">
    <property type="match status" value="1"/>
</dbReference>
<dbReference type="HAMAP" id="MF_00093">
    <property type="entry name" value="Rel_fac_1"/>
    <property type="match status" value="1"/>
</dbReference>
<dbReference type="InterPro" id="IPR005139">
    <property type="entry name" value="PCRF"/>
</dbReference>
<dbReference type="InterPro" id="IPR000352">
    <property type="entry name" value="Pep_chain_release_fac_I"/>
</dbReference>
<dbReference type="InterPro" id="IPR045853">
    <property type="entry name" value="Pep_chain_release_fac_I_sf"/>
</dbReference>
<dbReference type="InterPro" id="IPR050057">
    <property type="entry name" value="Prokaryotic/Mito_RF"/>
</dbReference>
<dbReference type="InterPro" id="IPR004373">
    <property type="entry name" value="RF-1"/>
</dbReference>
<dbReference type="NCBIfam" id="TIGR00019">
    <property type="entry name" value="prfA"/>
    <property type="match status" value="1"/>
</dbReference>
<dbReference type="NCBIfam" id="NF001859">
    <property type="entry name" value="PRK00591.1"/>
    <property type="match status" value="1"/>
</dbReference>
<dbReference type="PANTHER" id="PTHR43804">
    <property type="entry name" value="LD18447P"/>
    <property type="match status" value="1"/>
</dbReference>
<dbReference type="PANTHER" id="PTHR43804:SF7">
    <property type="entry name" value="LD18447P"/>
    <property type="match status" value="1"/>
</dbReference>
<dbReference type="Pfam" id="PF03462">
    <property type="entry name" value="PCRF"/>
    <property type="match status" value="1"/>
</dbReference>
<dbReference type="Pfam" id="PF00472">
    <property type="entry name" value="RF-1"/>
    <property type="match status" value="1"/>
</dbReference>
<dbReference type="SMART" id="SM00937">
    <property type="entry name" value="PCRF"/>
    <property type="match status" value="1"/>
</dbReference>
<dbReference type="SUPFAM" id="SSF75620">
    <property type="entry name" value="Release factor"/>
    <property type="match status" value="1"/>
</dbReference>
<dbReference type="PROSITE" id="PS00745">
    <property type="entry name" value="RF_PROK_I"/>
    <property type="match status" value="1"/>
</dbReference>
<gene>
    <name evidence="1" type="primary">prfA</name>
    <name type="ordered locus">ECUMN_1508</name>
</gene>